<dbReference type="PIR" id="S08997">
    <property type="entry name" value="S08997"/>
</dbReference>
<dbReference type="GO" id="GO:0005576">
    <property type="term" value="C:extracellular region"/>
    <property type="evidence" value="ECO:0007669"/>
    <property type="project" value="UniProtKB-SubCell"/>
</dbReference>
<dbReference type="GO" id="GO:0005179">
    <property type="term" value="F:hormone activity"/>
    <property type="evidence" value="ECO:0007669"/>
    <property type="project" value="UniProtKB-KW"/>
</dbReference>
<dbReference type="GO" id="GO:0007218">
    <property type="term" value="P:neuropeptide signaling pathway"/>
    <property type="evidence" value="ECO:0007669"/>
    <property type="project" value="UniProtKB-KW"/>
</dbReference>
<dbReference type="InterPro" id="IPR002047">
    <property type="entry name" value="Adipokinetic_hormone_CS"/>
</dbReference>
<dbReference type="PROSITE" id="PS00256">
    <property type="entry name" value="AKH"/>
    <property type="match status" value="1"/>
</dbReference>
<feature type="peptide" id="PRO_0000043431" description="Hypertrehalosaemic hormone">
    <location>
        <begin position="1"/>
        <end position="10"/>
    </location>
</feature>
<feature type="modified residue" description="Pyrrolidone carboxylic acid" evidence="1">
    <location>
        <position position="1"/>
    </location>
</feature>
<feature type="modified residue" description="Threonine amide" evidence="1">
    <location>
        <position position="10"/>
    </location>
</feature>
<proteinExistence type="evidence at protein level"/>
<accession>P84221</accession>
<accession>P10939</accession>
<comment type="function">
    <text>Hypertrehalosaemic factors are neuropeptides that elevate the level of trehalose in the hemolymph (trehalose is the major carbohydrate in the hemolymph of insects).</text>
</comment>
<comment type="subcellular location">
    <subcellularLocation>
        <location>Secreted</location>
    </subcellularLocation>
</comment>
<comment type="similarity">
    <text evidence="2">Belongs to the AKH/HRTH/RPCH family.</text>
</comment>
<evidence type="ECO:0000269" key="1">
    <source>
    </source>
</evidence>
<evidence type="ECO:0000305" key="2"/>
<reference key="1">
    <citation type="journal article" date="1990" name="Biol. Chem. Hoppe-Seyler">
        <title>Primary structures of hypertrehalosaemic neuropeptides isolated from the corpora cardiaca of the cockroaches Leucophaea maderae, Gromphadorhina portentosa, Blattella germanica and Blatta orientalis and of the stick insect Extatosoma tiaratum assigned by tandem fast atom bombardment mass spectrometry.</title>
        <authorList>
            <person name="Gaede G."/>
            <person name="Rinehart K.L. Jr."/>
        </authorList>
    </citation>
    <scope>PROTEIN SEQUENCE</scope>
</reference>
<reference key="2">
    <citation type="journal article" date="2009" name="BMC Evol. Biol.">
        <title>A proteomic approach for studying insect phylogeny: CAPA peptides of ancient insect taxa (Dictyoptera, Blattoptera) as a test case.</title>
        <authorList>
            <person name="Roth S."/>
            <person name="Fromm B."/>
            <person name="Gaede G."/>
            <person name="Predel R."/>
        </authorList>
    </citation>
    <scope>PROTEIN SEQUENCE</scope>
    <scope>PYROGLUTAMATE FORMATION AT GLN-1</scope>
    <scope>AMIDATION AT THR-10</scope>
    <source>
        <tissue>Corpora cardiaca</tissue>
    </source>
</reference>
<keyword id="KW-0027">Amidation</keyword>
<keyword id="KW-0903">Direct protein sequencing</keyword>
<keyword id="KW-0372">Hormone</keyword>
<keyword id="KW-0527">Neuropeptide</keyword>
<keyword id="KW-0873">Pyrrolidone carboxylic acid</keyword>
<keyword id="KW-0964">Secreted</keyword>
<sequence length="10" mass="1092">QVNFSPGWGT</sequence>
<organism>
    <name type="scientific">Gromphadorhina portentosa</name>
    <name type="common">Madagascan hissing cockroach</name>
    <dbReference type="NCBI Taxonomy" id="36953"/>
    <lineage>
        <taxon>Eukaryota</taxon>
        <taxon>Metazoa</taxon>
        <taxon>Ecdysozoa</taxon>
        <taxon>Arthropoda</taxon>
        <taxon>Hexapoda</taxon>
        <taxon>Insecta</taxon>
        <taxon>Pterygota</taxon>
        <taxon>Neoptera</taxon>
        <taxon>Polyneoptera</taxon>
        <taxon>Dictyoptera</taxon>
        <taxon>Blattodea</taxon>
        <taxon>Blaberoidea</taxon>
        <taxon>Blaberidae</taxon>
        <taxon>Oxyhaloinae</taxon>
        <taxon>Gromphadorhina</taxon>
    </lineage>
</organism>
<protein>
    <recommendedName>
        <fullName>Hypertrehalosaemic hormone</fullName>
        <shortName>HTH</shortName>
    </recommendedName>
    <alternativeName>
        <fullName>Adipokinetic hormone 1</fullName>
        <shortName>GroPo-AKH-1</shortName>
    </alternativeName>
    <alternativeName>
        <fullName>Hypertrehalosaemic neuropeptide</fullName>
    </alternativeName>
</protein>
<name>HTF_GROPO</name>